<protein>
    <recommendedName>
        <fullName evidence="1">ATP synthase subunit b</fullName>
    </recommendedName>
    <alternativeName>
        <fullName evidence="1">ATP synthase F(0) sector subunit b</fullName>
    </alternativeName>
    <alternativeName>
        <fullName evidence="1">ATPase subunit I</fullName>
    </alternativeName>
    <alternativeName>
        <fullName evidence="1">F-type ATPase subunit b</fullName>
        <shortName evidence="1">F-ATPase subunit b</shortName>
    </alternativeName>
</protein>
<organism>
    <name type="scientific">Ruegeria pomeroyi (strain ATCC 700808 / DSM 15171 / DSS-3)</name>
    <name type="common">Silicibacter pomeroyi</name>
    <dbReference type="NCBI Taxonomy" id="246200"/>
    <lineage>
        <taxon>Bacteria</taxon>
        <taxon>Pseudomonadati</taxon>
        <taxon>Pseudomonadota</taxon>
        <taxon>Alphaproteobacteria</taxon>
        <taxon>Rhodobacterales</taxon>
        <taxon>Roseobacteraceae</taxon>
        <taxon>Ruegeria</taxon>
    </lineage>
</organism>
<sequence>MRNILAPVLSLVLIAGVASPALAASGPFFSLKNTDFVVTIAFLVFIAVLFYFKVPSMIGGALDKRAEGIQSDLDEARKLREEAQSLLASFERKQKEMQGQADAIVAAAKEEAQRSAEQAKVDLEASIARRLAAAQDQIASAEAAAVKDVRDRAIAIAVAAAGDVIASSMTAAEANKLIDAGIADAGAKLH</sequence>
<reference key="1">
    <citation type="journal article" date="2004" name="Nature">
        <title>Genome sequence of Silicibacter pomeroyi reveals adaptations to the marine environment.</title>
        <authorList>
            <person name="Moran M.A."/>
            <person name="Buchan A."/>
            <person name="Gonzalez J.M."/>
            <person name="Heidelberg J.F."/>
            <person name="Whitman W.B."/>
            <person name="Kiene R.P."/>
            <person name="Henriksen J.R."/>
            <person name="King G.M."/>
            <person name="Belas R."/>
            <person name="Fuqua C."/>
            <person name="Brinkac L.M."/>
            <person name="Lewis M."/>
            <person name="Johri S."/>
            <person name="Weaver B."/>
            <person name="Pai G."/>
            <person name="Eisen J.A."/>
            <person name="Rahe E."/>
            <person name="Sheldon W.M."/>
            <person name="Ye W."/>
            <person name="Miller T.R."/>
            <person name="Carlton J."/>
            <person name="Rasko D.A."/>
            <person name="Paulsen I.T."/>
            <person name="Ren Q."/>
            <person name="Daugherty S.C."/>
            <person name="DeBoy R.T."/>
            <person name="Dodson R.J."/>
            <person name="Durkin A.S."/>
            <person name="Madupu R."/>
            <person name="Nelson W.C."/>
            <person name="Sullivan S.A."/>
            <person name="Rosovitz M.J."/>
            <person name="Haft D.H."/>
            <person name="Selengut J."/>
            <person name="Ward N."/>
        </authorList>
    </citation>
    <scope>NUCLEOTIDE SEQUENCE [LARGE SCALE GENOMIC DNA]</scope>
    <source>
        <strain>ATCC 700808 / DSM 15171 / DSS-3</strain>
    </source>
</reference>
<reference key="2">
    <citation type="journal article" date="2014" name="Stand. Genomic Sci.">
        <title>An updated genome annotation for the model marine bacterium Ruegeria pomeroyi DSS-3.</title>
        <authorList>
            <person name="Rivers A.R."/>
            <person name="Smith C.B."/>
            <person name="Moran M.A."/>
        </authorList>
    </citation>
    <scope>GENOME REANNOTATION</scope>
    <source>
        <strain>ATCC 700808 / DSM 15171 / DSS-3</strain>
    </source>
</reference>
<evidence type="ECO:0000255" key="1">
    <source>
        <dbReference type="HAMAP-Rule" id="MF_01398"/>
    </source>
</evidence>
<comment type="function">
    <text evidence="1">F(1)F(0) ATP synthase produces ATP from ADP in the presence of a proton or sodium gradient. F-type ATPases consist of two structural domains, F(1) containing the extramembraneous catalytic core and F(0) containing the membrane proton channel, linked together by a central stalk and a peripheral stalk. During catalysis, ATP synthesis in the catalytic domain of F(1) is coupled via a rotary mechanism of the central stalk subunits to proton translocation.</text>
</comment>
<comment type="function">
    <text evidence="1">Component of the F(0) channel, it forms part of the peripheral stalk, linking F(1) to F(0).</text>
</comment>
<comment type="subunit">
    <text evidence="1">F-type ATPases have 2 components, F(1) - the catalytic core - and F(0) - the membrane proton channel. F(1) has five subunits: alpha(3), beta(3), gamma(1), delta(1), epsilon(1). F(0) has three main subunits: a(1), b(2) and c(10-14). The alpha and beta chains form an alternating ring which encloses part of the gamma chain. F(1) is attached to F(0) by a central stalk formed by the gamma and epsilon chains, while a peripheral stalk is formed by the delta and b chains.</text>
</comment>
<comment type="subcellular location">
    <subcellularLocation>
        <location evidence="1">Cell inner membrane</location>
        <topology evidence="1">Single-pass membrane protein</topology>
    </subcellularLocation>
</comment>
<comment type="similarity">
    <text evidence="1">Belongs to the ATPase B chain family.</text>
</comment>
<keyword id="KW-0066">ATP synthesis</keyword>
<keyword id="KW-0997">Cell inner membrane</keyword>
<keyword id="KW-1003">Cell membrane</keyword>
<keyword id="KW-0138">CF(0)</keyword>
<keyword id="KW-0375">Hydrogen ion transport</keyword>
<keyword id="KW-0406">Ion transport</keyword>
<keyword id="KW-0472">Membrane</keyword>
<keyword id="KW-1185">Reference proteome</keyword>
<keyword id="KW-0812">Transmembrane</keyword>
<keyword id="KW-1133">Transmembrane helix</keyword>
<keyword id="KW-0813">Transport</keyword>
<proteinExistence type="inferred from homology"/>
<feature type="chain" id="PRO_0000368775" description="ATP synthase subunit b">
    <location>
        <begin position="1"/>
        <end position="190"/>
    </location>
</feature>
<feature type="transmembrane region" description="Helical" evidence="1">
    <location>
        <begin position="4"/>
        <end position="24"/>
    </location>
</feature>
<gene>
    <name evidence="1" type="primary">atpF</name>
    <name type="ordered locus">SPO3233</name>
</gene>
<name>ATPF_RUEPO</name>
<accession>Q5LNH2</accession>
<dbReference type="EMBL" id="CP000031">
    <property type="protein sequence ID" value="AAV96468.1"/>
    <property type="molecule type" value="Genomic_DNA"/>
</dbReference>
<dbReference type="RefSeq" id="WP_011048923.1">
    <property type="nucleotide sequence ID" value="NC_003911.12"/>
</dbReference>
<dbReference type="SMR" id="Q5LNH2"/>
<dbReference type="STRING" id="246200.SPO3233"/>
<dbReference type="PaxDb" id="246200-SPO3233"/>
<dbReference type="KEGG" id="sil:SPO3233"/>
<dbReference type="eggNOG" id="COG0711">
    <property type="taxonomic scope" value="Bacteria"/>
</dbReference>
<dbReference type="HOGENOM" id="CLU_079215_6_2_5"/>
<dbReference type="OrthoDB" id="8479836at2"/>
<dbReference type="Proteomes" id="UP000001023">
    <property type="component" value="Chromosome"/>
</dbReference>
<dbReference type="GO" id="GO:0005886">
    <property type="term" value="C:plasma membrane"/>
    <property type="evidence" value="ECO:0007669"/>
    <property type="project" value="UniProtKB-SubCell"/>
</dbReference>
<dbReference type="GO" id="GO:0045259">
    <property type="term" value="C:proton-transporting ATP synthase complex"/>
    <property type="evidence" value="ECO:0007669"/>
    <property type="project" value="UniProtKB-KW"/>
</dbReference>
<dbReference type="GO" id="GO:0046933">
    <property type="term" value="F:proton-transporting ATP synthase activity, rotational mechanism"/>
    <property type="evidence" value="ECO:0007669"/>
    <property type="project" value="UniProtKB-UniRule"/>
</dbReference>
<dbReference type="GO" id="GO:0046961">
    <property type="term" value="F:proton-transporting ATPase activity, rotational mechanism"/>
    <property type="evidence" value="ECO:0007669"/>
    <property type="project" value="TreeGrafter"/>
</dbReference>
<dbReference type="CDD" id="cd06503">
    <property type="entry name" value="ATP-synt_Fo_b"/>
    <property type="match status" value="1"/>
</dbReference>
<dbReference type="HAMAP" id="MF_01398">
    <property type="entry name" value="ATP_synth_b_bprime"/>
    <property type="match status" value="1"/>
</dbReference>
<dbReference type="InterPro" id="IPR002146">
    <property type="entry name" value="ATP_synth_b/b'su_bac/chlpt"/>
</dbReference>
<dbReference type="InterPro" id="IPR050059">
    <property type="entry name" value="ATP_synthase_B_chain"/>
</dbReference>
<dbReference type="NCBIfam" id="NF009989">
    <property type="entry name" value="PRK13455.1"/>
    <property type="match status" value="1"/>
</dbReference>
<dbReference type="PANTHER" id="PTHR33445:SF1">
    <property type="entry name" value="ATP SYNTHASE SUBUNIT B"/>
    <property type="match status" value="1"/>
</dbReference>
<dbReference type="PANTHER" id="PTHR33445">
    <property type="entry name" value="ATP SYNTHASE SUBUNIT B', CHLOROPLASTIC"/>
    <property type="match status" value="1"/>
</dbReference>
<dbReference type="Pfam" id="PF00430">
    <property type="entry name" value="ATP-synt_B"/>
    <property type="match status" value="1"/>
</dbReference>